<gene>
    <name evidence="1" type="primary">dnaG</name>
    <name type="ordered locus">M1425_2041</name>
</gene>
<proteinExistence type="inferred from homology"/>
<accession>C3MYZ8</accession>
<reference key="1">
    <citation type="journal article" date="2009" name="Proc. Natl. Acad. Sci. U.S.A.">
        <title>Biogeography of the Sulfolobus islandicus pan-genome.</title>
        <authorList>
            <person name="Reno M.L."/>
            <person name="Held N.L."/>
            <person name="Fields C.J."/>
            <person name="Burke P.V."/>
            <person name="Whitaker R.J."/>
        </authorList>
    </citation>
    <scope>NUCLEOTIDE SEQUENCE [LARGE SCALE GENOMIC DNA]</scope>
    <source>
        <strain>M.14.25 / Kamchatka #1</strain>
    </source>
</reference>
<name>DNAG_SACI4</name>
<keyword id="KW-0235">DNA replication</keyword>
<keyword id="KW-0240">DNA-directed RNA polymerase</keyword>
<keyword id="KW-0271">Exosome</keyword>
<keyword id="KW-0460">Magnesium</keyword>
<keyword id="KW-0479">Metal-binding</keyword>
<keyword id="KW-0548">Nucleotidyltransferase</keyword>
<keyword id="KW-0639">Primosome</keyword>
<keyword id="KW-0804">Transcription</keyword>
<keyword id="KW-0808">Transferase</keyword>
<dbReference type="EC" id="2.7.7.101" evidence="1"/>
<dbReference type="EMBL" id="CP001400">
    <property type="protein sequence ID" value="ACP38782.1"/>
    <property type="molecule type" value="Genomic_DNA"/>
</dbReference>
<dbReference type="RefSeq" id="WP_012712008.1">
    <property type="nucleotide sequence ID" value="NC_012588.1"/>
</dbReference>
<dbReference type="SMR" id="C3MYZ8"/>
<dbReference type="GeneID" id="84059392"/>
<dbReference type="KEGG" id="sia:M1425_2041"/>
<dbReference type="HOGENOM" id="CLU_034626_0_0_2"/>
<dbReference type="Proteomes" id="UP000001350">
    <property type="component" value="Chromosome"/>
</dbReference>
<dbReference type="GO" id="GO:0005737">
    <property type="term" value="C:cytoplasm"/>
    <property type="evidence" value="ECO:0007669"/>
    <property type="project" value="TreeGrafter"/>
</dbReference>
<dbReference type="GO" id="GO:0000428">
    <property type="term" value="C:DNA-directed RNA polymerase complex"/>
    <property type="evidence" value="ECO:0007669"/>
    <property type="project" value="UniProtKB-KW"/>
</dbReference>
<dbReference type="GO" id="GO:0000178">
    <property type="term" value="C:exosome (RNase complex)"/>
    <property type="evidence" value="ECO:0007669"/>
    <property type="project" value="UniProtKB-KW"/>
</dbReference>
<dbReference type="GO" id="GO:1990077">
    <property type="term" value="C:primosome complex"/>
    <property type="evidence" value="ECO:0007669"/>
    <property type="project" value="UniProtKB-KW"/>
</dbReference>
<dbReference type="GO" id="GO:0003899">
    <property type="term" value="F:DNA-directed RNA polymerase activity"/>
    <property type="evidence" value="ECO:0007669"/>
    <property type="project" value="InterPro"/>
</dbReference>
<dbReference type="GO" id="GO:0046872">
    <property type="term" value="F:metal ion binding"/>
    <property type="evidence" value="ECO:0007669"/>
    <property type="project" value="UniProtKB-KW"/>
</dbReference>
<dbReference type="GO" id="GO:0008143">
    <property type="term" value="F:poly(A) binding"/>
    <property type="evidence" value="ECO:0007669"/>
    <property type="project" value="InterPro"/>
</dbReference>
<dbReference type="GO" id="GO:0006269">
    <property type="term" value="P:DNA replication, synthesis of primer"/>
    <property type="evidence" value="ECO:0007669"/>
    <property type="project" value="UniProtKB-UniRule"/>
</dbReference>
<dbReference type="CDD" id="cd01029">
    <property type="entry name" value="TOPRIM_primases"/>
    <property type="match status" value="1"/>
</dbReference>
<dbReference type="FunFam" id="3.40.1360.10:FF:000010">
    <property type="entry name" value="DNA primase DnaG"/>
    <property type="match status" value="1"/>
</dbReference>
<dbReference type="Gene3D" id="3.40.1360.10">
    <property type="match status" value="1"/>
</dbReference>
<dbReference type="HAMAP" id="MF_00007">
    <property type="entry name" value="DNA_primase_DnaG_arc"/>
    <property type="match status" value="1"/>
</dbReference>
<dbReference type="InterPro" id="IPR050219">
    <property type="entry name" value="DnaG_primase"/>
</dbReference>
<dbReference type="InterPro" id="IPR020607">
    <property type="entry name" value="Primase_DnaG_arc"/>
</dbReference>
<dbReference type="InterPro" id="IPR034154">
    <property type="entry name" value="TOPRIM_DnaG/twinkle"/>
</dbReference>
<dbReference type="InterPro" id="IPR006171">
    <property type="entry name" value="TOPRIM_dom"/>
</dbReference>
<dbReference type="NCBIfam" id="NF003108">
    <property type="entry name" value="PRK04031.1-1"/>
    <property type="match status" value="1"/>
</dbReference>
<dbReference type="PANTHER" id="PTHR30313">
    <property type="entry name" value="DNA PRIMASE"/>
    <property type="match status" value="1"/>
</dbReference>
<dbReference type="PANTHER" id="PTHR30313:SF2">
    <property type="entry name" value="DNA PRIMASE"/>
    <property type="match status" value="1"/>
</dbReference>
<dbReference type="Pfam" id="PF13662">
    <property type="entry name" value="Toprim_4"/>
    <property type="match status" value="1"/>
</dbReference>
<dbReference type="SMART" id="SM00493">
    <property type="entry name" value="TOPRIM"/>
    <property type="match status" value="1"/>
</dbReference>
<dbReference type="SUPFAM" id="SSF56731">
    <property type="entry name" value="DNA primase core"/>
    <property type="match status" value="1"/>
</dbReference>
<dbReference type="PROSITE" id="PS50880">
    <property type="entry name" value="TOPRIM"/>
    <property type="match status" value="1"/>
</dbReference>
<protein>
    <recommendedName>
        <fullName evidence="1">DNA primase DnaG</fullName>
        <ecNumber evidence="1">2.7.7.101</ecNumber>
    </recommendedName>
</protein>
<feature type="chain" id="PRO_1000201711" description="DNA primase DnaG">
    <location>
        <begin position="1"/>
        <end position="402"/>
    </location>
</feature>
<feature type="domain" description="Toprim" evidence="1">
    <location>
        <begin position="165"/>
        <end position="243"/>
    </location>
</feature>
<feature type="binding site" evidence="1">
    <location>
        <position position="171"/>
    </location>
    <ligand>
        <name>Mg(2+)</name>
        <dbReference type="ChEBI" id="CHEBI:18420"/>
        <label>1</label>
        <note>catalytic</note>
    </ligand>
</feature>
<feature type="binding site" evidence="1">
    <location>
        <position position="216"/>
    </location>
    <ligand>
        <name>Mg(2+)</name>
        <dbReference type="ChEBI" id="CHEBI:18420"/>
        <label>1</label>
        <note>catalytic</note>
    </ligand>
</feature>
<feature type="binding site" evidence="1">
    <location>
        <position position="216"/>
    </location>
    <ligand>
        <name>Mg(2+)</name>
        <dbReference type="ChEBI" id="CHEBI:18420"/>
        <label>2</label>
    </ligand>
</feature>
<feature type="binding site" evidence="1">
    <location>
        <position position="218"/>
    </location>
    <ligand>
        <name>Mg(2+)</name>
        <dbReference type="ChEBI" id="CHEBI:18420"/>
        <label>2</label>
    </ligand>
</feature>
<sequence>MKYDIKLRFEVEGIVEKTDVIGAIFGQTENLFGDEFDLRELQDKGRLGRIIVEIRTKGGKSEGEIIIPSNLDRIETALIAAMVESVDKVGPYNSKFELIEIEDIRAEKLKKIIERAKGILSSWSKEKSLDIKEVINEISSAVKVGEITEYGPERLPAGPDVDKDPNLIIVEGRADVINLLRYGYKNVIAVEGATSRIPETVVSLSKMKKTVIAFLDGDHGGDLILKELLSNNVKIDFVARAPVGREVEELTGKEIAKALSNMMPLTQYLKKIQEAEQAIAKNVIAKEEKPIQLEATQQLVQITLPQNVLEEIKKLPGTLEGVLYDNNWNLIEKVQVRDIIPKLEAYEDNKVAYIVFDGVITQRLLDLASQKNIKMIIGARIGGINKRPQNVDILTFTDIISS</sequence>
<organism>
    <name type="scientific">Saccharolobus islandicus (strain M.14.25 / Kamchatka #1)</name>
    <name type="common">Sulfolobus islandicus</name>
    <dbReference type="NCBI Taxonomy" id="427317"/>
    <lineage>
        <taxon>Archaea</taxon>
        <taxon>Thermoproteota</taxon>
        <taxon>Thermoprotei</taxon>
        <taxon>Sulfolobales</taxon>
        <taxon>Sulfolobaceae</taxon>
        <taxon>Saccharolobus</taxon>
    </lineage>
</organism>
<evidence type="ECO:0000255" key="1">
    <source>
        <dbReference type="HAMAP-Rule" id="MF_00007"/>
    </source>
</evidence>
<comment type="function">
    <text evidence="1">RNA polymerase that catalyzes the synthesis of short RNA molecules used as primers for DNA polymerase during DNA replication. Also part of the exosome, which is a complex involved in RNA degradation. Acts as a poly(A)-binding protein that enhances the interaction between heteromeric, adenine-rich transcripts and the exosome.</text>
</comment>
<comment type="catalytic activity">
    <reaction evidence="1">
        <text>ssDNA + n NTP = ssDNA/pppN(pN)n-1 hybrid + (n-1) diphosphate.</text>
        <dbReference type="EC" id="2.7.7.101"/>
    </reaction>
</comment>
<comment type="cofactor">
    <cofactor evidence="1">
        <name>Mg(2+)</name>
        <dbReference type="ChEBI" id="CHEBI:18420"/>
    </cofactor>
    <text evidence="1">Binds two Mg(2+) per subunit.</text>
</comment>
<comment type="subunit">
    <text evidence="1">Forms a ternary complex with MCM helicase and DNA. Component of the archaeal exosome complex.</text>
</comment>
<comment type="similarity">
    <text evidence="1">Belongs to the archaeal DnaG primase family.</text>
</comment>